<keyword id="KW-0012">Acyltransferase</keyword>
<keyword id="KW-0963">Cytoplasm</keyword>
<keyword id="KW-1185">Reference proteome</keyword>
<keyword id="KW-0808">Transferase</keyword>
<accession>P45107</accession>
<comment type="function">
    <text evidence="1">Involved in acetate metabolism.</text>
</comment>
<comment type="catalytic activity">
    <reaction>
        <text>acetyl-CoA + phosphate = acetyl phosphate + CoA</text>
        <dbReference type="Rhea" id="RHEA:19521"/>
        <dbReference type="ChEBI" id="CHEBI:22191"/>
        <dbReference type="ChEBI" id="CHEBI:43474"/>
        <dbReference type="ChEBI" id="CHEBI:57287"/>
        <dbReference type="ChEBI" id="CHEBI:57288"/>
        <dbReference type="EC" id="2.3.1.8"/>
    </reaction>
</comment>
<comment type="pathway">
    <text>Metabolic intermediate biosynthesis; acetyl-CoA biosynthesis; acetyl-CoA from acetate: step 2/2.</text>
</comment>
<comment type="subunit">
    <text evidence="1">Homohexamer.</text>
</comment>
<comment type="subcellular location">
    <subcellularLocation>
        <location evidence="2">Cytoplasm</location>
    </subcellularLocation>
</comment>
<comment type="domain">
    <text evidence="1">The N-terminal region seems to be important for proper quaternary structure. The C-terminal region contains the substrate-binding site (By similarity).</text>
</comment>
<comment type="similarity">
    <text evidence="2">In the N-terminal section; belongs to the CobB/CobQ family.</text>
</comment>
<comment type="similarity">
    <text evidence="2">In the C-terminal section; belongs to the phosphate acetyltransferase and butyryltransferase family.</text>
</comment>
<dbReference type="EC" id="2.3.1.8"/>
<dbReference type="EMBL" id="L42023">
    <property type="protein sequence ID" value="AAC22857.1"/>
    <property type="molecule type" value="Genomic_DNA"/>
</dbReference>
<dbReference type="PIR" id="B64169">
    <property type="entry name" value="B64169"/>
</dbReference>
<dbReference type="RefSeq" id="NP_439359.1">
    <property type="nucleotide sequence ID" value="NC_000907.1"/>
</dbReference>
<dbReference type="SMR" id="P45107"/>
<dbReference type="STRING" id="71421.HI_1203"/>
<dbReference type="DNASU" id="950151"/>
<dbReference type="EnsemblBacteria" id="AAC22857">
    <property type="protein sequence ID" value="AAC22857"/>
    <property type="gene ID" value="HI_1203"/>
</dbReference>
<dbReference type="KEGG" id="hin:HI_1203"/>
<dbReference type="PATRIC" id="fig|71421.8.peg.1255"/>
<dbReference type="eggNOG" id="COG0280">
    <property type="taxonomic scope" value="Bacteria"/>
</dbReference>
<dbReference type="eggNOG" id="COG0857">
    <property type="taxonomic scope" value="Bacteria"/>
</dbReference>
<dbReference type="HOGENOM" id="CLU_019723_2_1_6"/>
<dbReference type="OrthoDB" id="9808984at2"/>
<dbReference type="PhylomeDB" id="P45107"/>
<dbReference type="BioCyc" id="HINF71421:G1GJ1-1234-MONOMER"/>
<dbReference type="UniPathway" id="UPA00340">
    <property type="reaction ID" value="UER00459"/>
</dbReference>
<dbReference type="Proteomes" id="UP000000579">
    <property type="component" value="Chromosome"/>
</dbReference>
<dbReference type="GO" id="GO:0005737">
    <property type="term" value="C:cytoplasm"/>
    <property type="evidence" value="ECO:0007669"/>
    <property type="project" value="UniProtKB-SubCell"/>
</dbReference>
<dbReference type="GO" id="GO:0008959">
    <property type="term" value="F:phosphate acetyltransferase activity"/>
    <property type="evidence" value="ECO:0007669"/>
    <property type="project" value="UniProtKB-EC"/>
</dbReference>
<dbReference type="GO" id="GO:0006085">
    <property type="term" value="P:acetyl-CoA biosynthetic process"/>
    <property type="evidence" value="ECO:0007669"/>
    <property type="project" value="UniProtKB-UniPathway"/>
</dbReference>
<dbReference type="CDD" id="cd03109">
    <property type="entry name" value="DTBS"/>
    <property type="match status" value="1"/>
</dbReference>
<dbReference type="FunFam" id="3.40.50.10750:FF:000001">
    <property type="entry name" value="Phosphate acetyltransferase"/>
    <property type="match status" value="1"/>
</dbReference>
<dbReference type="Gene3D" id="3.40.50.10950">
    <property type="match status" value="1"/>
</dbReference>
<dbReference type="Gene3D" id="3.40.1390.20">
    <property type="entry name" value="HprK N-terminal domain-like"/>
    <property type="match status" value="1"/>
</dbReference>
<dbReference type="Gene3D" id="3.40.50.10750">
    <property type="entry name" value="Isocitrate/Isopropylmalate dehydrogenase-like"/>
    <property type="match status" value="1"/>
</dbReference>
<dbReference type="Gene3D" id="3.40.50.300">
    <property type="entry name" value="P-loop containing nucleotide triphosphate hydrolases"/>
    <property type="match status" value="1"/>
</dbReference>
<dbReference type="InterPro" id="IPR010766">
    <property type="entry name" value="DRTGG"/>
</dbReference>
<dbReference type="InterPro" id="IPR016475">
    <property type="entry name" value="P-Actrans_bac"/>
</dbReference>
<dbReference type="InterPro" id="IPR027417">
    <property type="entry name" value="P-loop_NTPase"/>
</dbReference>
<dbReference type="InterPro" id="IPR004614">
    <property type="entry name" value="P_AcTrfase"/>
</dbReference>
<dbReference type="InterPro" id="IPR042113">
    <property type="entry name" value="P_AcTrfase_dom1"/>
</dbReference>
<dbReference type="InterPro" id="IPR042112">
    <property type="entry name" value="P_AcTrfase_dom2"/>
</dbReference>
<dbReference type="InterPro" id="IPR050500">
    <property type="entry name" value="Phos_Acetyltrans/Butyryltrans"/>
</dbReference>
<dbReference type="InterPro" id="IPR002505">
    <property type="entry name" value="PTA_PTB"/>
</dbReference>
<dbReference type="InterPro" id="IPR028979">
    <property type="entry name" value="Ser_kin/Pase_Hpr-like_N_sf"/>
</dbReference>
<dbReference type="NCBIfam" id="NF004167">
    <property type="entry name" value="PRK05632.1"/>
    <property type="match status" value="1"/>
</dbReference>
<dbReference type="NCBIfam" id="NF007233">
    <property type="entry name" value="PRK09653.1"/>
    <property type="match status" value="1"/>
</dbReference>
<dbReference type="NCBIfam" id="TIGR00651">
    <property type="entry name" value="pta"/>
    <property type="match status" value="1"/>
</dbReference>
<dbReference type="PANTHER" id="PTHR43356">
    <property type="entry name" value="PHOSPHATE ACETYLTRANSFERASE"/>
    <property type="match status" value="1"/>
</dbReference>
<dbReference type="PANTHER" id="PTHR43356:SF3">
    <property type="entry name" value="PHOSPHATE ACETYLTRANSFERASE"/>
    <property type="match status" value="1"/>
</dbReference>
<dbReference type="Pfam" id="PF13500">
    <property type="entry name" value="AAA_26"/>
    <property type="match status" value="1"/>
</dbReference>
<dbReference type="Pfam" id="PF07085">
    <property type="entry name" value="DRTGG"/>
    <property type="match status" value="1"/>
</dbReference>
<dbReference type="Pfam" id="PF01515">
    <property type="entry name" value="PTA_PTB"/>
    <property type="match status" value="1"/>
</dbReference>
<dbReference type="PIRSF" id="PIRSF006107">
    <property type="entry name" value="PhpActrans_proteobac"/>
    <property type="match status" value="1"/>
</dbReference>
<dbReference type="SUPFAM" id="SSF75138">
    <property type="entry name" value="HprK N-terminal domain-like"/>
    <property type="match status" value="1"/>
</dbReference>
<dbReference type="SUPFAM" id="SSF53659">
    <property type="entry name" value="Isocitrate/Isopropylmalate dehydrogenase-like"/>
    <property type="match status" value="1"/>
</dbReference>
<dbReference type="SUPFAM" id="SSF52540">
    <property type="entry name" value="P-loop containing nucleoside triphosphate hydrolases"/>
    <property type="match status" value="1"/>
</dbReference>
<organism>
    <name type="scientific">Haemophilus influenzae (strain ATCC 51907 / DSM 11121 / KW20 / Rd)</name>
    <dbReference type="NCBI Taxonomy" id="71421"/>
    <lineage>
        <taxon>Bacteria</taxon>
        <taxon>Pseudomonadati</taxon>
        <taxon>Pseudomonadota</taxon>
        <taxon>Gammaproteobacteria</taxon>
        <taxon>Pasteurellales</taxon>
        <taxon>Pasteurellaceae</taxon>
        <taxon>Haemophilus</taxon>
    </lineage>
</organism>
<proteinExistence type="inferred from homology"/>
<name>PTA_HAEIN</name>
<reference key="1">
    <citation type="journal article" date="1995" name="Science">
        <title>Whole-genome random sequencing and assembly of Haemophilus influenzae Rd.</title>
        <authorList>
            <person name="Fleischmann R.D."/>
            <person name="Adams M.D."/>
            <person name="White O."/>
            <person name="Clayton R.A."/>
            <person name="Kirkness E.F."/>
            <person name="Kerlavage A.R."/>
            <person name="Bult C.J."/>
            <person name="Tomb J.-F."/>
            <person name="Dougherty B.A."/>
            <person name="Merrick J.M."/>
            <person name="McKenney K."/>
            <person name="Sutton G.G."/>
            <person name="FitzHugh W."/>
            <person name="Fields C.A."/>
            <person name="Gocayne J.D."/>
            <person name="Scott J.D."/>
            <person name="Shirley R."/>
            <person name="Liu L.-I."/>
            <person name="Glodek A."/>
            <person name="Kelley J.M."/>
            <person name="Weidman J.F."/>
            <person name="Phillips C.A."/>
            <person name="Spriggs T."/>
            <person name="Hedblom E."/>
            <person name="Cotton M.D."/>
            <person name="Utterback T.R."/>
            <person name="Hanna M.C."/>
            <person name="Nguyen D.T."/>
            <person name="Saudek D.M."/>
            <person name="Brandon R.C."/>
            <person name="Fine L.D."/>
            <person name="Fritchman J.L."/>
            <person name="Fuhrmann J.L."/>
            <person name="Geoghagen N.S.M."/>
            <person name="Gnehm C.L."/>
            <person name="McDonald L.A."/>
            <person name="Small K.V."/>
            <person name="Fraser C.M."/>
            <person name="Smith H.O."/>
            <person name="Venter J.C."/>
        </authorList>
    </citation>
    <scope>NUCLEOTIDE SEQUENCE [LARGE SCALE GENOMIC DNA]</scope>
    <source>
        <strain>ATCC 51907 / DSM 11121 / KW20 / Rd</strain>
    </source>
</reference>
<evidence type="ECO:0000250" key="1"/>
<evidence type="ECO:0000305" key="2"/>
<feature type="chain" id="PRO_0000179130" description="Phosphate acetyltransferase">
    <location>
        <begin position="1"/>
        <end position="711"/>
    </location>
</feature>
<feature type="region of interest" description="Phosphate acetyltransferase">
    <location>
        <begin position="390"/>
        <end position="711"/>
    </location>
</feature>
<gene>
    <name type="primary">pta</name>
    <name type="ordered locus">HI_1203</name>
</gene>
<sequence length="711" mass="76517">MSRTIILIPVSTGVGLTSISLGLIHSLEQKGTKVAFMKPVSQPSTGEDKLDRTTSIIRTSTSLETAEPFMLSVAESLIGQNQSDVLLEKIVANHQQLTKNNDIVVVEGLIPTRKHGYANSINYEIAQALDAEIVLVAAPATETPTELKDRVEAAASLFGGKNNPNLLGVVVNKFNAPVDESGRTRPDLAEIFDSFQHNHISETEVNKLFAGSAIKLLACVPWNANLIATRAIDLVKHLGASIINEGEINRRIRGITFCARSLPNMVEHFRAGSLLVASADRPDVLVAAALAASNGIEIGGILLTGGYKIDAQINKLCRPTFEKAKLPIFRIEGNTWQTALSLQSFNLEVPVDDKERIENIKQYISQHFNADFINNLVADSSRLPRLSPPAFRFQLTELARAAKKRIVLPEGDEPRTIKAAVLCAERGIAECVLLADPASVQRVAEAQGVKLGKGITIINPADVRENYVDRLVELRKAKGMTETAAREQLEDTVVLGTMMLEANEVDGLVSGAVHTTANTIRPPMQIIKTAPGSSIVSSIFFMLLPDQVLVYGDCAVNPDPTAEQLAEIAIQSADSAKAFGIDPKVAMISYSTGTSGSGADVEKVKEATRIAKEKRPDLLIDGPLQYDAAVMEDVARSKAPNSPVAGKATVFVFPDLNTGNTTYKAVQRSADLVSIGPMLQGMRKPVNDLSRGALVDDIVYTIALTAIQATQ</sequence>
<protein>
    <recommendedName>
        <fullName>Phosphate acetyltransferase</fullName>
        <ecNumber>2.3.1.8</ecNumber>
    </recommendedName>
    <alternativeName>
        <fullName>Phosphotransacetylase</fullName>
    </alternativeName>
</protein>